<reference key="1">
    <citation type="journal article" date="1997" name="Arthritis Rheum.">
        <title>Molecular cloning of a novel 97-kd Golgi complex autoantigen associated with Sjoegren's syndrome.</title>
        <authorList>
            <person name="Griffith K.J."/>
            <person name="Chan E.K.L."/>
            <person name="Lung C.-C."/>
            <person name="Hamel J.C."/>
            <person name="Guo X."/>
            <person name="Miyachi K."/>
            <person name="Fritzler M.J."/>
        </authorList>
    </citation>
    <scope>NUCLEOTIDE SEQUENCE [MRNA]</scope>
    <scope>ROLE IN SJOEGREN SYNDROME</scope>
    <scope>SUBCELLULAR LOCATION</scope>
    <scope>VARIANT VAL-317</scope>
    <source>
        <tissue>Cervix carcinoma</tissue>
    </source>
</reference>
<reference key="2">
    <citation type="journal article" date="2004" name="Nature">
        <title>DNA sequence and analysis of human chromosome 9.</title>
        <authorList>
            <person name="Humphray S.J."/>
            <person name="Oliver K."/>
            <person name="Hunt A.R."/>
            <person name="Plumb R.W."/>
            <person name="Loveland J.E."/>
            <person name="Howe K.L."/>
            <person name="Andrews T.D."/>
            <person name="Searle S."/>
            <person name="Hunt S.E."/>
            <person name="Scott C.E."/>
            <person name="Jones M.C."/>
            <person name="Ainscough R."/>
            <person name="Almeida J.P."/>
            <person name="Ambrose K.D."/>
            <person name="Ashwell R.I.S."/>
            <person name="Babbage A.K."/>
            <person name="Babbage S."/>
            <person name="Bagguley C.L."/>
            <person name="Bailey J."/>
            <person name="Banerjee R."/>
            <person name="Barker D.J."/>
            <person name="Barlow K.F."/>
            <person name="Bates K."/>
            <person name="Beasley H."/>
            <person name="Beasley O."/>
            <person name="Bird C.P."/>
            <person name="Bray-Allen S."/>
            <person name="Brown A.J."/>
            <person name="Brown J.Y."/>
            <person name="Burford D."/>
            <person name="Burrill W."/>
            <person name="Burton J."/>
            <person name="Carder C."/>
            <person name="Carter N.P."/>
            <person name="Chapman J.C."/>
            <person name="Chen Y."/>
            <person name="Clarke G."/>
            <person name="Clark S.Y."/>
            <person name="Clee C.M."/>
            <person name="Clegg S."/>
            <person name="Collier R.E."/>
            <person name="Corby N."/>
            <person name="Crosier M."/>
            <person name="Cummings A.T."/>
            <person name="Davies J."/>
            <person name="Dhami P."/>
            <person name="Dunn M."/>
            <person name="Dutta I."/>
            <person name="Dyer L.W."/>
            <person name="Earthrowl M.E."/>
            <person name="Faulkner L."/>
            <person name="Fleming C.J."/>
            <person name="Frankish A."/>
            <person name="Frankland J.A."/>
            <person name="French L."/>
            <person name="Fricker D.G."/>
            <person name="Garner P."/>
            <person name="Garnett J."/>
            <person name="Ghori J."/>
            <person name="Gilbert J.G.R."/>
            <person name="Glison C."/>
            <person name="Grafham D.V."/>
            <person name="Gribble S."/>
            <person name="Griffiths C."/>
            <person name="Griffiths-Jones S."/>
            <person name="Grocock R."/>
            <person name="Guy J."/>
            <person name="Hall R.E."/>
            <person name="Hammond S."/>
            <person name="Harley J.L."/>
            <person name="Harrison E.S.I."/>
            <person name="Hart E.A."/>
            <person name="Heath P.D."/>
            <person name="Henderson C.D."/>
            <person name="Hopkins B.L."/>
            <person name="Howard P.J."/>
            <person name="Howden P.J."/>
            <person name="Huckle E."/>
            <person name="Johnson C."/>
            <person name="Johnson D."/>
            <person name="Joy A.A."/>
            <person name="Kay M."/>
            <person name="Keenan S."/>
            <person name="Kershaw J.K."/>
            <person name="Kimberley A.M."/>
            <person name="King A."/>
            <person name="Knights A."/>
            <person name="Laird G.K."/>
            <person name="Langford C."/>
            <person name="Lawlor S."/>
            <person name="Leongamornlert D.A."/>
            <person name="Leversha M."/>
            <person name="Lloyd C."/>
            <person name="Lloyd D.M."/>
            <person name="Lovell J."/>
            <person name="Martin S."/>
            <person name="Mashreghi-Mohammadi M."/>
            <person name="Matthews L."/>
            <person name="McLaren S."/>
            <person name="McLay K.E."/>
            <person name="McMurray A."/>
            <person name="Milne S."/>
            <person name="Nickerson T."/>
            <person name="Nisbett J."/>
            <person name="Nordsiek G."/>
            <person name="Pearce A.V."/>
            <person name="Peck A.I."/>
            <person name="Porter K.M."/>
            <person name="Pandian R."/>
            <person name="Pelan S."/>
            <person name="Phillimore B."/>
            <person name="Povey S."/>
            <person name="Ramsey Y."/>
            <person name="Rand V."/>
            <person name="Scharfe M."/>
            <person name="Sehra H.K."/>
            <person name="Shownkeen R."/>
            <person name="Sims S.K."/>
            <person name="Skuce C.D."/>
            <person name="Smith M."/>
            <person name="Steward C.A."/>
            <person name="Swarbreck D."/>
            <person name="Sycamore N."/>
            <person name="Tester J."/>
            <person name="Thorpe A."/>
            <person name="Tracey A."/>
            <person name="Tromans A."/>
            <person name="Thomas D.W."/>
            <person name="Wall M."/>
            <person name="Wallis J.M."/>
            <person name="West A.P."/>
            <person name="Whitehead S.L."/>
            <person name="Willey D.L."/>
            <person name="Williams S.A."/>
            <person name="Wilming L."/>
            <person name="Wray P.W."/>
            <person name="Young L."/>
            <person name="Ashurst J.L."/>
            <person name="Coulson A."/>
            <person name="Blocker H."/>
            <person name="Durbin R.M."/>
            <person name="Sulston J.E."/>
            <person name="Hubbard T."/>
            <person name="Jackson M.J."/>
            <person name="Bentley D.R."/>
            <person name="Beck S."/>
            <person name="Rogers J."/>
            <person name="Dunham I."/>
        </authorList>
    </citation>
    <scope>NUCLEOTIDE SEQUENCE [LARGE SCALE GENOMIC DNA]</scope>
</reference>
<reference key="3">
    <citation type="journal article" date="2004" name="Genome Res.">
        <title>The status, quality, and expansion of the NIH full-length cDNA project: the Mammalian Gene Collection (MGC).</title>
        <authorList>
            <consortium name="The MGC Project Team"/>
        </authorList>
    </citation>
    <scope>NUCLEOTIDE SEQUENCE [LARGE SCALE MRNA]</scope>
    <scope>VARIANTS VAL-317 AND MET-425</scope>
    <source>
        <tissue>Testis</tissue>
    </source>
</reference>
<reference key="4">
    <citation type="journal article" date="1999" name="Curr. Biol.">
        <title>A novel Rab6-interacting domain defines a family of Golgi-targeted coiled-coil proteins.</title>
        <authorList>
            <person name="Barr F.A."/>
        </authorList>
    </citation>
    <scope>INTERACTION WITH RAB6A</scope>
    <scope>SUBCELLULAR LOCATION</scope>
    <scope>MUTAGENESIS OF PHE-695; GLU-696; TYR-697; LEU-698; MET-742; SER-743 AND TRP-744</scope>
</reference>
<reference key="5">
    <citation type="journal article" date="1999" name="Curr. Biol.">
        <title>A novel Golgi-localisation domain shared by a class of coiled-coil peripheral membrane proteins.</title>
        <authorList>
            <person name="Kjer-Nielsen L."/>
            <person name="Teasdale R.D."/>
            <person name="van Vliet C."/>
            <person name="Gleeson P.A."/>
        </authorList>
    </citation>
    <scope>SUBCELLULAR LOCATION</scope>
</reference>
<reference key="6">
    <citation type="journal article" date="2003" name="Mol. Biol. Cell">
        <title>Interaction of Arl1-GTP with GRIP domains recruits autoantigens Golgin-97 and Golgin-245/p230 onto the Golgi.</title>
        <authorList>
            <person name="Lu L."/>
            <person name="Hong W."/>
        </authorList>
    </citation>
    <scope>SUBCELLULAR LOCATION</scope>
    <scope>INTERACTION WITH ARL1</scope>
</reference>
<reference key="7">
    <citation type="journal article" date="2007" name="Virology">
        <title>A host cell membrane protein, golgin-97, is essential for poxvirus morphogenesis.</title>
        <authorList>
            <person name="Alzhanova D."/>
            <person name="Hruby D.E."/>
        </authorList>
    </citation>
    <scope>FUNCTION (MICROBIAL INFECTION)</scope>
    <scope>SUBCELLULAR LOCATION</scope>
</reference>
<reference key="8">
    <citation type="journal article" date="2008" name="Proc. Natl. Acad. Sci. U.S.A.">
        <title>A quantitative atlas of mitotic phosphorylation.</title>
        <authorList>
            <person name="Dephoure N."/>
            <person name="Zhou C."/>
            <person name="Villen J."/>
            <person name="Beausoleil S.A."/>
            <person name="Bakalarski C.E."/>
            <person name="Elledge S.J."/>
            <person name="Gygi S.P."/>
        </authorList>
    </citation>
    <scope>IDENTIFICATION BY MASS SPECTROMETRY [LARGE SCALE ANALYSIS]</scope>
    <source>
        <tissue>Cervix carcinoma</tissue>
    </source>
</reference>
<reference key="9">
    <citation type="journal article" date="2010" name="Sci. Signal.">
        <title>Quantitative phosphoproteomics reveals widespread full phosphorylation site occupancy during mitosis.</title>
        <authorList>
            <person name="Olsen J.V."/>
            <person name="Vermeulen M."/>
            <person name="Santamaria A."/>
            <person name="Kumar C."/>
            <person name="Miller M.L."/>
            <person name="Jensen L.J."/>
            <person name="Gnad F."/>
            <person name="Cox J."/>
            <person name="Jensen T.S."/>
            <person name="Nigg E.A."/>
            <person name="Brunak S."/>
            <person name="Mann M."/>
        </authorList>
    </citation>
    <scope>PHOSPHORYLATION [LARGE SCALE ANALYSIS] AT SER-41; SER-50 AND SER-51</scope>
    <scope>IDENTIFICATION BY MASS SPECTROMETRY [LARGE SCALE ANALYSIS]</scope>
    <source>
        <tissue>Cervix carcinoma</tissue>
    </source>
</reference>
<reference key="10">
    <citation type="journal article" date="2014" name="J. Proteomics">
        <title>An enzyme assisted RP-RPLC approach for in-depth analysis of human liver phosphoproteome.</title>
        <authorList>
            <person name="Bian Y."/>
            <person name="Song C."/>
            <person name="Cheng K."/>
            <person name="Dong M."/>
            <person name="Wang F."/>
            <person name="Huang J."/>
            <person name="Sun D."/>
            <person name="Wang L."/>
            <person name="Ye M."/>
            <person name="Zou H."/>
        </authorList>
    </citation>
    <scope>PHOSPHORYLATION [LARGE SCALE ANALYSIS] AT SER-41</scope>
    <scope>IDENTIFICATION BY MASS SPECTROMETRY [LARGE SCALE ANALYSIS]</scope>
    <source>
        <tissue>Liver</tissue>
    </source>
</reference>
<reference key="11">
    <citation type="journal article" date="2017" name="Nat. Cell Biol.">
        <title>TBC1D23 is a bridging factor for endosomal vesicle capture by golgins at the trans-Golgi.</title>
        <authorList>
            <person name="Shin J.J.H."/>
            <person name="Gillingham A.K."/>
            <person name="Begum F."/>
            <person name="Chadwick J."/>
            <person name="Munro S."/>
        </authorList>
    </citation>
    <scope>FUNCTION</scope>
    <scope>INTERACTION WITH TBC1D23 AND FAM91A1</scope>
    <scope>SUBCELLULAR LOCATION</scope>
    <scope>MUTAGENESIS OF PHE-2; LYS-4; LEU-5; LYS-6; LYS-7; LYS-8; ILE-9; GLU-11 AND GLU-12</scope>
</reference>
<reference key="12">
    <citation type="journal article" date="2022" name="Proc. Natl. Acad. Sci. U.S.A.">
        <title>PKD-dependent PARP12-catalyzed mono-ADP-ribosylation of Golgin-97 is required for E-cadherin transport from Golgi to plasma membrane.</title>
        <authorList>
            <person name="Grimaldi G."/>
            <person name="Filograna A."/>
            <person name="Schembri L."/>
            <person name="Lo Monte M."/>
            <person name="Di Martino R."/>
            <person name="Pirozzi M."/>
            <person name="Spano D."/>
            <person name="Beccari A.R."/>
            <person name="Parashuraman S."/>
            <person name="Luini A."/>
            <person name="Valente C."/>
            <person name="Corda D."/>
        </authorList>
    </citation>
    <scope>FUNCTION</scope>
    <scope>MARYLATION BY PARP12</scope>
</reference>
<reference key="13">
    <citation type="journal article" date="2024" name="Sci. Adv.">
        <title>Cargo selective vesicle tethering: The structural basis for binding of specific cargo proteins by the Golgi tether component TBC1D23.</title>
        <authorList>
            <person name="Cattin-Ortola J."/>
            <person name="Kaufman J.G.G."/>
            <person name="Gillingham A.K."/>
            <person name="Wagstaff J.L."/>
            <person name="Peak-Chew S.Y."/>
            <person name="Stevens T.J."/>
            <person name="Boulanger J."/>
            <person name="Owen D.J."/>
            <person name="Munro S."/>
        </authorList>
    </citation>
    <scope>FUNCTION</scope>
    <scope>INTERACTION WITH TBC1D23</scope>
</reference>
<dbReference type="EMBL" id="U51587">
    <property type="protein sequence ID" value="AAB81549.1"/>
    <property type="molecule type" value="mRNA"/>
</dbReference>
<dbReference type="EMBL" id="AL451125">
    <property type="status" value="NOT_ANNOTATED_CDS"/>
    <property type="molecule type" value="Genomic_DNA"/>
</dbReference>
<dbReference type="EMBL" id="AL354928">
    <property type="status" value="NOT_ANNOTATED_CDS"/>
    <property type="molecule type" value="Genomic_DNA"/>
</dbReference>
<dbReference type="EMBL" id="BC032853">
    <property type="protein sequence ID" value="AAH32853.1"/>
    <property type="molecule type" value="mRNA"/>
</dbReference>
<dbReference type="CCDS" id="CCDS6860.1"/>
<dbReference type="RefSeq" id="NP_002068.2">
    <property type="nucleotide sequence ID" value="NM_002077.4"/>
</dbReference>
<dbReference type="RefSeq" id="XP_005251986.1">
    <property type="nucleotide sequence ID" value="XM_005251929.5"/>
</dbReference>
<dbReference type="RefSeq" id="XP_006717125.1">
    <property type="nucleotide sequence ID" value="XM_006717062.5"/>
</dbReference>
<dbReference type="RefSeq" id="XP_006717126.1">
    <property type="nucleotide sequence ID" value="XM_006717063.5"/>
</dbReference>
<dbReference type="RefSeq" id="XP_047279197.1">
    <property type="nucleotide sequence ID" value="XM_047423241.1"/>
</dbReference>
<dbReference type="RefSeq" id="XP_047279198.1">
    <property type="nucleotide sequence ID" value="XM_047423242.1"/>
</dbReference>
<dbReference type="SMR" id="Q92805"/>
<dbReference type="BioGRID" id="109062">
    <property type="interactions" value="178"/>
</dbReference>
<dbReference type="FunCoup" id="Q92805">
    <property type="interactions" value="3148"/>
</dbReference>
<dbReference type="IntAct" id="Q92805">
    <property type="interactions" value="28"/>
</dbReference>
<dbReference type="MINT" id="Q92805"/>
<dbReference type="STRING" id="9606.ENSP00000362656"/>
<dbReference type="iPTMnet" id="Q92805"/>
<dbReference type="PhosphoSitePlus" id="Q92805"/>
<dbReference type="BioMuta" id="GOLGA1"/>
<dbReference type="DMDM" id="311033445"/>
<dbReference type="jPOST" id="Q92805"/>
<dbReference type="MassIVE" id="Q92805"/>
<dbReference type="PaxDb" id="9606-ENSP00000362656"/>
<dbReference type="PeptideAtlas" id="Q92805"/>
<dbReference type="ProteomicsDB" id="75490"/>
<dbReference type="Pumba" id="Q92805"/>
<dbReference type="Antibodypedia" id="30502">
    <property type="antibodies" value="194 antibodies from 29 providers"/>
</dbReference>
<dbReference type="DNASU" id="2800"/>
<dbReference type="Ensembl" id="ENST00000373555.9">
    <property type="protein sequence ID" value="ENSP00000362656.4"/>
    <property type="gene ID" value="ENSG00000136935.14"/>
</dbReference>
<dbReference type="GeneID" id="2800"/>
<dbReference type="KEGG" id="hsa:2800"/>
<dbReference type="MANE-Select" id="ENST00000373555.9">
    <property type="protein sequence ID" value="ENSP00000362656.4"/>
    <property type="RefSeq nucleotide sequence ID" value="NM_002077.4"/>
    <property type="RefSeq protein sequence ID" value="NP_002068.2"/>
</dbReference>
<dbReference type="UCSC" id="uc004bpc.4">
    <property type="organism name" value="human"/>
</dbReference>
<dbReference type="AGR" id="HGNC:4424"/>
<dbReference type="CTD" id="2800"/>
<dbReference type="DisGeNET" id="2800"/>
<dbReference type="GeneCards" id="GOLGA1"/>
<dbReference type="HGNC" id="HGNC:4424">
    <property type="gene designation" value="GOLGA1"/>
</dbReference>
<dbReference type="HPA" id="ENSG00000136935">
    <property type="expression patterns" value="Low tissue specificity"/>
</dbReference>
<dbReference type="MIM" id="602502">
    <property type="type" value="gene"/>
</dbReference>
<dbReference type="neXtProt" id="NX_Q92805"/>
<dbReference type="OpenTargets" id="ENSG00000136935"/>
<dbReference type="PharmGKB" id="PA28804"/>
<dbReference type="VEuPathDB" id="HostDB:ENSG00000136935"/>
<dbReference type="eggNOG" id="KOG0992">
    <property type="taxonomic scope" value="Eukaryota"/>
</dbReference>
<dbReference type="GeneTree" id="ENSGT00940000153772"/>
<dbReference type="HOGENOM" id="CLU_022663_0_0_1"/>
<dbReference type="InParanoid" id="Q92805"/>
<dbReference type="OMA" id="GNCIIMD"/>
<dbReference type="OrthoDB" id="5848685at2759"/>
<dbReference type="PAN-GO" id="Q92805">
    <property type="GO annotations" value="1 GO annotation based on evolutionary models"/>
</dbReference>
<dbReference type="PhylomeDB" id="Q92805"/>
<dbReference type="TreeFam" id="TF326001"/>
<dbReference type="PathwayCommons" id="Q92805"/>
<dbReference type="Reactome" id="R-HSA-6811440">
    <property type="pathway name" value="Retrograde transport at the Trans-Golgi-Network"/>
</dbReference>
<dbReference type="SignaLink" id="Q92805"/>
<dbReference type="BioGRID-ORCS" id="2800">
    <property type="hits" value="15 hits in 1159 CRISPR screens"/>
</dbReference>
<dbReference type="CD-CODE" id="F3208D05">
    <property type="entry name" value="Golgin condensate"/>
</dbReference>
<dbReference type="ChiTaRS" id="GOLGA1">
    <property type="organism name" value="human"/>
</dbReference>
<dbReference type="GeneWiki" id="GOLGA1"/>
<dbReference type="GenomeRNAi" id="2800"/>
<dbReference type="Pharos" id="Q92805">
    <property type="development level" value="Tbio"/>
</dbReference>
<dbReference type="PRO" id="PR:Q92805"/>
<dbReference type="Proteomes" id="UP000005640">
    <property type="component" value="Chromosome 9"/>
</dbReference>
<dbReference type="RNAct" id="Q92805">
    <property type="molecule type" value="protein"/>
</dbReference>
<dbReference type="Bgee" id="ENSG00000136935">
    <property type="expression patterns" value="Expressed in sural nerve and 188 other cell types or tissues"/>
</dbReference>
<dbReference type="ExpressionAtlas" id="Q92805">
    <property type="expression patterns" value="baseline and differential"/>
</dbReference>
<dbReference type="GO" id="GO:0001669">
    <property type="term" value="C:acrosomal vesicle"/>
    <property type="evidence" value="ECO:0007669"/>
    <property type="project" value="UniProtKB-SubCell"/>
</dbReference>
<dbReference type="GO" id="GO:0005829">
    <property type="term" value="C:cytosol"/>
    <property type="evidence" value="ECO:0000304"/>
    <property type="project" value="Reactome"/>
</dbReference>
<dbReference type="GO" id="GO:0005794">
    <property type="term" value="C:Golgi apparatus"/>
    <property type="evidence" value="ECO:0000314"/>
    <property type="project" value="MGI"/>
</dbReference>
<dbReference type="GO" id="GO:0000139">
    <property type="term" value="C:Golgi membrane"/>
    <property type="evidence" value="ECO:0007669"/>
    <property type="project" value="UniProtKB-SubCell"/>
</dbReference>
<dbReference type="GO" id="GO:0048471">
    <property type="term" value="C:perinuclear region of cytoplasm"/>
    <property type="evidence" value="ECO:0007669"/>
    <property type="project" value="Ensembl"/>
</dbReference>
<dbReference type="GO" id="GO:0005802">
    <property type="term" value="C:trans-Golgi network"/>
    <property type="evidence" value="ECO:0000314"/>
    <property type="project" value="CACAO"/>
</dbReference>
<dbReference type="FunFam" id="1.10.220.60:FF:000002">
    <property type="entry name" value="Golgin subfamily A member 1"/>
    <property type="match status" value="1"/>
</dbReference>
<dbReference type="Gene3D" id="1.10.220.60">
    <property type="entry name" value="GRIP domain"/>
    <property type="match status" value="1"/>
</dbReference>
<dbReference type="InterPro" id="IPR051952">
    <property type="entry name" value="Golgi-autophagy_related"/>
</dbReference>
<dbReference type="InterPro" id="IPR000237">
    <property type="entry name" value="GRIP_dom"/>
</dbReference>
<dbReference type="PANTHER" id="PTHR23157:SF24">
    <property type="entry name" value="GOLGIN SUBFAMILY A MEMBER 1"/>
    <property type="match status" value="1"/>
</dbReference>
<dbReference type="PANTHER" id="PTHR23157">
    <property type="entry name" value="GRIP AND COILED-COIL DOMAIN-CONTAINING PROTEIN 1"/>
    <property type="match status" value="1"/>
</dbReference>
<dbReference type="Pfam" id="PF01465">
    <property type="entry name" value="GRIP"/>
    <property type="match status" value="1"/>
</dbReference>
<dbReference type="SMART" id="SM00755">
    <property type="entry name" value="Grip"/>
    <property type="match status" value="1"/>
</dbReference>
<dbReference type="PROSITE" id="PS50913">
    <property type="entry name" value="GRIP"/>
    <property type="match status" value="1"/>
</dbReference>
<name>GOGA1_HUMAN</name>
<feature type="chain" id="PRO_0000190052" description="Golgin subfamily A member 1">
    <location>
        <begin position="1"/>
        <end position="767"/>
    </location>
</feature>
<feature type="domain" description="GRIP" evidence="3">
    <location>
        <begin position="688"/>
        <end position="737"/>
    </location>
</feature>
<feature type="region of interest" description="Disordered" evidence="4">
    <location>
        <begin position="13"/>
        <end position="58"/>
    </location>
</feature>
<feature type="region of interest" description="Disordered" evidence="4">
    <location>
        <begin position="748"/>
        <end position="767"/>
    </location>
</feature>
<feature type="coiled-coil region" evidence="2">
    <location>
        <begin position="50"/>
        <end position="657"/>
    </location>
</feature>
<feature type="modified residue" description="Phosphoserine" evidence="1">
    <location>
        <position position="30"/>
    </location>
</feature>
<feature type="modified residue" description="Phosphoserine" evidence="1">
    <location>
        <position position="36"/>
    </location>
</feature>
<feature type="modified residue" description="Phosphoserine" evidence="15 16">
    <location>
        <position position="41"/>
    </location>
</feature>
<feature type="modified residue" description="Phosphoserine" evidence="1">
    <location>
        <position position="47"/>
    </location>
</feature>
<feature type="modified residue" description="Phosphoserine" evidence="15">
    <location>
        <position position="50"/>
    </location>
</feature>
<feature type="modified residue" description="Phosphoserine" evidence="15">
    <location>
        <position position="51"/>
    </location>
</feature>
<feature type="sequence variant" id="VAR_047842" description="In dbSNP:rs35237091.">
    <original>N</original>
    <variation>S</variation>
    <location>
        <position position="220"/>
    </location>
</feature>
<feature type="sequence variant" id="VAR_047843" description="In dbSNP:rs583134." evidence="8 13">
    <original>L</original>
    <variation>V</variation>
    <location>
        <position position="317"/>
    </location>
</feature>
<feature type="sequence variant" id="VAR_047844" description="In dbSNP:rs634710." evidence="8">
    <original>T</original>
    <variation>M</variation>
    <location>
        <position position="425"/>
    </location>
</feature>
<feature type="mutagenesis site" description="Loss of TBC1D23-binding." evidence="10">
    <original>F</original>
    <variation>A</variation>
    <location>
        <position position="2"/>
    </location>
</feature>
<feature type="mutagenesis site" description="No effect on TBC1D23-binding." evidence="10">
    <original>K</original>
    <variation>A</variation>
    <location>
        <position position="4"/>
    </location>
</feature>
<feature type="mutagenesis site" description="Loss of TBC1D23-binding." evidence="10">
    <original>L</original>
    <variation>A</variation>
    <location>
        <position position="5"/>
    </location>
</feature>
<feature type="mutagenesis site" description="Decreased TBC1D23-binding." evidence="10">
    <original>K</original>
    <variation>A</variation>
    <location>
        <position position="6"/>
    </location>
</feature>
<feature type="mutagenesis site" description="No effect on TBC1D23-binding." evidence="10">
    <original>K</original>
    <variation>A</variation>
    <location>
        <position position="7"/>
    </location>
</feature>
<feature type="mutagenesis site" description="No effect on TBC1D23-binding." evidence="10">
    <original>K</original>
    <variation>A</variation>
    <location>
        <position position="8"/>
    </location>
</feature>
<feature type="mutagenesis site" description="Decreased TBC1D23-binding." evidence="10">
    <original>I</original>
    <variation>A</variation>
    <location>
        <position position="9"/>
    </location>
</feature>
<feature type="mutagenesis site" description="No effect on TBC1D23-binding." evidence="10">
    <original>E</original>
    <variation>A</variation>
    <location>
        <position position="11"/>
    </location>
</feature>
<feature type="mutagenesis site" description="No effect on TBC1D23-binding." evidence="10">
    <original>E</original>
    <variation>A</variation>
    <location>
        <position position="12"/>
    </location>
</feature>
<feature type="mutagenesis site" description="No effect on RAB6A-binding, nor on targeting to the Golgi apparatus." evidence="5">
    <original>F</original>
    <variation>A</variation>
    <location>
        <position position="695"/>
    </location>
</feature>
<feature type="mutagenesis site" description="No effect on RAB6A-binding, nor on targeting to the Golgi apparatus." evidence="5">
    <original>E</original>
    <variation>A</variation>
    <location>
        <position position="696"/>
    </location>
</feature>
<feature type="mutagenesis site" description="Loss of RAB6A-binding and of targeting to the Golgi apparatus." evidence="5">
    <original>Y</original>
    <variation>A</variation>
    <location>
        <position position="697"/>
    </location>
</feature>
<feature type="mutagenesis site" description="No effect on RAB6A-binding, nor on targeting to the Golgi apparatus." evidence="5">
    <original>L</original>
    <variation>A</variation>
    <location>
        <position position="698"/>
    </location>
</feature>
<feature type="mutagenesis site" description="No effect on subcellular localization at the Golgi apparatus." evidence="5">
    <original>M</original>
    <variation>A</variation>
    <location>
        <position position="742"/>
    </location>
</feature>
<feature type="mutagenesis site" description="No effect on subcellular localization at the Golgi apparatus, small decrease in RAB6A-binding." evidence="5">
    <original>S</original>
    <variation>A</variation>
    <location>
        <position position="743"/>
    </location>
</feature>
<feature type="mutagenesis site" description="Drastically reduced targeting to the Golgi apparatus, small decrease in RAB6A-binding." evidence="5">
    <original>W</original>
    <variation>A</variation>
    <location>
        <position position="744"/>
    </location>
</feature>
<accession>Q92805</accession>
<accession>Q5T164</accession>
<accession>Q8IYZ9</accession>
<sequence length="767" mass="88184">MFAKLKKKIAEETAVAQRPGGATRIPRSVSKESVASMGADSGDDFASDGSSSREDLSSQLLRRNEQIRKLEARLSDYAEQVRNLQKIKEKLEIALEKHQDSSMRKFQEQNETFQANRAKMAEGLALALARKDQEWSEKMDQLEKEKNILTAQLQEMKNQSMNLFQRRDEMDELEGFQQQELSKIKHMLLKKEESLGKMEQELEARTRELSRTQEELMNSNQMSSDLSQKLEELQRHYSTLEEQRDHVIASKTGAESKITALEQKEQELQALIQQLSIDLQKVTAETQEKEDVITHLQEKVASLEKRLEQNLSGEEHLQELLKEKTLAEQNLEDTRQQLLAARSSQAKAINTLETRVRELEQTLQASEEQLQQSKGIVAAQETQIQELAAANQESSHVQQQALALEQQFLERTQALEAQIVALERTRAADQTTAEQGMRQLEQENAALKECRNEYERSLQNHQFELKKLKEEWSQREIVSVAMAQALEEVRKQREEFQQQAANLTAIIDEKEQNLREKTEVLLQKEQEILQLERGHNSALLQIHQLQAELEALRTLKAEEAAVVAEQEDLLRLRGPLQAEALSVNESHVTSRAMQDPVFQLPTAGRTPNGEVGAMDLTQLQKEKQDLEQQLLEKNKTIKQMQQRMLELRKTLQKELKIRPDNELFEVREKPGPEMANMAPSVTNNTDLTDAREINFEYLKHVVLKFMSCRESEAFHLIKAVSVLLNFSQEEENMLKETLEYKMSWFGSKPAPKGSIRPSISNPRIPWS</sequence>
<gene>
    <name type="primary">GOLGA1</name>
</gene>
<comment type="function">
    <text evidence="10 11 12">Involved in vesicular trafficking at the Golgi apparatus level. Involved in endosome-to-Golgi trafficking. Mechanistically, captures transport vesicles arriving from endosomes via the protein TBC1D23 (PubMed:29084197, PubMed:38552021). Recognized vesicles are then tethered to the trans-Golgi before subsequent SNARE engagement and vesicle fusion. Selectively regulates E-cadherin transport from the trans-Golgi network in tubulovesicular carriers (PubMed:34969853).</text>
</comment>
<comment type="function">
    <text evidence="9">(Microbial infection) Plays an important role in poxvirus morphogenesis. Translocates into the viral factories where it may transport the membrane fragments and associated protein factors important for virus maturation to the sites of virion assembly.</text>
</comment>
<comment type="subunit">
    <text evidence="5 7 10 12">Interacts with RAB6A (PubMed:10209123). Directly interacts with TBC1D23 (PubMed:29084197, PubMed:38552021). Interacts with FAM91A1; this interaction may be mediated by TBC1D23 (PubMed:29084197). Interacts with ARL1; this interaction recruits Golgin-97/GOLGA1 onto the Golgi apparatus (PubMed:12972563).</text>
</comment>
<comment type="interaction">
    <interactant intactId="EBI-6164177">
        <id>Q92805</id>
    </interactant>
    <interactant intactId="EBI-492498">
        <id>P18848</id>
        <label>ATF4</label>
    </interactant>
    <organismsDiffer>false</organismsDiffer>
    <experiments>11</experiments>
</comment>
<comment type="interaction">
    <interactant intactId="EBI-6164177">
        <id>Q92805</id>
    </interactant>
    <interactant intactId="EBI-10181988">
        <id>Q8IYX8-2</id>
        <label>CEP57L1</label>
    </interactant>
    <organismsDiffer>false</organismsDiffer>
    <experiments>3</experiments>
</comment>
<comment type="interaction">
    <interactant intactId="EBI-6164177">
        <id>Q92805</id>
    </interactant>
    <interactant intactId="EBI-2349927">
        <id>Q5JST6</id>
        <label>EFHC2</label>
    </interactant>
    <organismsDiffer>false</organismsDiffer>
    <experiments>3</experiments>
</comment>
<comment type="interaction">
    <interactant intactId="EBI-6164177">
        <id>Q92805</id>
    </interactant>
    <interactant intactId="EBI-17869840">
        <id>Q96A65-2</id>
        <label>EXOC4</label>
    </interactant>
    <organismsDiffer>false</organismsDiffer>
    <experiments>3</experiments>
</comment>
<comment type="interaction">
    <interactant intactId="EBI-6164177">
        <id>Q92805</id>
    </interactant>
    <interactant intactId="EBI-7116203">
        <id>O75031</id>
        <label>HSF2BP</label>
    </interactant>
    <organismsDiffer>false</organismsDiffer>
    <experiments>3</experiments>
</comment>
<comment type="interaction">
    <interactant intactId="EBI-6164177">
        <id>Q92805</id>
    </interactant>
    <interactant intactId="EBI-3437878">
        <id>Q86T90</id>
        <label>KIAA1328</label>
    </interactant>
    <organismsDiffer>false</organismsDiffer>
    <experiments>3</experiments>
</comment>
<comment type="interaction">
    <interactant intactId="EBI-6164177">
        <id>Q92805</id>
    </interactant>
    <interactant intactId="EBI-14069005">
        <id>Q9BVG8-5</id>
        <label>KIFC3</label>
    </interactant>
    <organismsDiffer>false</organismsDiffer>
    <experiments>3</experiments>
</comment>
<comment type="interaction">
    <interactant intactId="EBI-6164177">
        <id>Q92805</id>
    </interactant>
    <interactant intactId="EBI-3044087">
        <id>Q7Z3Y8</id>
        <label>KRT27</label>
    </interactant>
    <organismsDiffer>false</organismsDiffer>
    <experiments>3</experiments>
</comment>
<comment type="interaction">
    <interactant intactId="EBI-6164177">
        <id>Q92805</id>
    </interactant>
    <interactant intactId="EBI-1216080">
        <id>Q9Y250</id>
        <label>LZTS1</label>
    </interactant>
    <organismsDiffer>false</organismsDiffer>
    <experiments>3</experiments>
</comment>
<comment type="interaction">
    <interactant intactId="EBI-6164177">
        <id>Q92805</id>
    </interactant>
    <interactant intactId="EBI-1105153">
        <id>Q96KQ4</id>
        <label>PPP1R13B</label>
    </interactant>
    <organismsDiffer>false</organismsDiffer>
    <experiments>3</experiments>
</comment>
<comment type="interaction">
    <interactant intactId="EBI-6164177">
        <id>Q92805</id>
    </interactant>
    <interactant intactId="EBI-2805516">
        <id>P31321</id>
        <label>PRKAR1B</label>
    </interactant>
    <organismsDiffer>false</organismsDiffer>
    <experiments>3</experiments>
</comment>
<comment type="interaction">
    <interactant intactId="EBI-6164177">
        <id>Q92805</id>
    </interactant>
    <interactant intactId="EBI-10269374">
        <id>Q8ND83</id>
        <label>SLAIN1</label>
    </interactant>
    <organismsDiffer>false</organismsDiffer>
    <experiments>3</experiments>
</comment>
<comment type="interaction">
    <interactant intactId="EBI-6164177">
        <id>Q92805</id>
    </interactant>
    <interactant intactId="EBI-1105213">
        <id>Q9UBB9</id>
        <label>TFIP11</label>
    </interactant>
    <organismsDiffer>false</organismsDiffer>
    <experiments>6</experiments>
</comment>
<comment type="interaction">
    <interactant intactId="EBI-6164177">
        <id>Q92805</id>
    </interactant>
    <interactant intactId="EBI-11952721">
        <id>Q05BL1</id>
        <label>TP53BP2</label>
    </interactant>
    <organismsDiffer>false</organismsDiffer>
    <experiments>3</experiments>
</comment>
<comment type="interaction">
    <interactant intactId="EBI-6164177">
        <id>Q92805</id>
    </interactant>
    <interactant intactId="EBI-10180829">
        <id>Q7KZS0</id>
        <label>UBE2I</label>
    </interactant>
    <organismsDiffer>false</organismsDiffer>
    <experiments>3</experiments>
</comment>
<comment type="interaction">
    <interactant intactId="EBI-6164177">
        <id>Q92805</id>
    </interactant>
    <interactant intactId="EBI-2799833">
        <id>Q8N1B4</id>
        <label>VPS52</label>
    </interactant>
    <organismsDiffer>false</organismsDiffer>
    <experiments>6</experiments>
</comment>
<comment type="interaction">
    <interactant intactId="EBI-6164177">
        <id>Q92805</id>
    </interactant>
    <interactant intactId="EBI-14104088">
        <id>Q53FD0-2</id>
        <label>ZC2HC1C</label>
    </interactant>
    <organismsDiffer>false</organismsDiffer>
    <experiments>3</experiments>
</comment>
<comment type="interaction">
    <interactant intactId="EBI-6164177">
        <id>Q92805</id>
    </interactant>
    <interactant intactId="EBI-10251462">
        <id>Q6NX45</id>
        <label>ZNF774</label>
    </interactant>
    <organismsDiffer>false</organismsDiffer>
    <experiments>3</experiments>
</comment>
<comment type="subcellular location">
    <subcellularLocation>
        <location evidence="5 6 7 13">Golgi apparatus membrane</location>
        <topology evidence="14">Peripheral membrane protein</topology>
    </subcellularLocation>
    <subcellularLocation>
        <location evidence="9 10">Golgi apparatus</location>
        <location evidence="9 10">trans-Golgi network membrane</location>
    </subcellularLocation>
    <subcellularLocation>
        <location evidence="1">Cytoplasmic vesicle</location>
        <location evidence="1">Secretory vesicle</location>
        <location evidence="1">Acrosome</location>
    </subcellularLocation>
</comment>
<comment type="PTM">
    <text evidence="11">MARylated by PARP12; MARylation is required for basolateral export of E-Cadherin.</text>
</comment>
<comment type="miscellaneous">
    <text evidence="13">Antibodies against GOLGA1 are present in sera from patients with Sjoegren syndrome. Sera from patients with Sjoegren syndrome often contain antibodies that react with normal components of the Golgi complex.</text>
</comment>
<evidence type="ECO:0000250" key="1">
    <source>
        <dbReference type="UniProtKB" id="Q9CW79"/>
    </source>
</evidence>
<evidence type="ECO:0000255" key="2"/>
<evidence type="ECO:0000255" key="3">
    <source>
        <dbReference type="PROSITE-ProRule" id="PRU00250"/>
    </source>
</evidence>
<evidence type="ECO:0000256" key="4">
    <source>
        <dbReference type="SAM" id="MobiDB-lite"/>
    </source>
</evidence>
<evidence type="ECO:0000269" key="5">
    <source>
    </source>
</evidence>
<evidence type="ECO:0000269" key="6">
    <source>
    </source>
</evidence>
<evidence type="ECO:0000269" key="7">
    <source>
    </source>
</evidence>
<evidence type="ECO:0000269" key="8">
    <source>
    </source>
</evidence>
<evidence type="ECO:0000269" key="9">
    <source>
    </source>
</evidence>
<evidence type="ECO:0000269" key="10">
    <source>
    </source>
</evidence>
<evidence type="ECO:0000269" key="11">
    <source>
    </source>
</evidence>
<evidence type="ECO:0000269" key="12">
    <source>
    </source>
</evidence>
<evidence type="ECO:0000269" key="13">
    <source>
    </source>
</evidence>
<evidence type="ECO:0000305" key="14"/>
<evidence type="ECO:0007744" key="15">
    <source>
    </source>
</evidence>
<evidence type="ECO:0007744" key="16">
    <source>
    </source>
</evidence>
<keyword id="KW-0013">ADP-ribosylation</keyword>
<keyword id="KW-0175">Coiled coil</keyword>
<keyword id="KW-0968">Cytoplasmic vesicle</keyword>
<keyword id="KW-0333">Golgi apparatus</keyword>
<keyword id="KW-0472">Membrane</keyword>
<keyword id="KW-0597">Phosphoprotein</keyword>
<keyword id="KW-1267">Proteomics identification</keyword>
<keyword id="KW-1185">Reference proteome</keyword>
<organism>
    <name type="scientific">Homo sapiens</name>
    <name type="common">Human</name>
    <dbReference type="NCBI Taxonomy" id="9606"/>
    <lineage>
        <taxon>Eukaryota</taxon>
        <taxon>Metazoa</taxon>
        <taxon>Chordata</taxon>
        <taxon>Craniata</taxon>
        <taxon>Vertebrata</taxon>
        <taxon>Euteleostomi</taxon>
        <taxon>Mammalia</taxon>
        <taxon>Eutheria</taxon>
        <taxon>Euarchontoglires</taxon>
        <taxon>Primates</taxon>
        <taxon>Haplorrhini</taxon>
        <taxon>Catarrhini</taxon>
        <taxon>Hominidae</taxon>
        <taxon>Homo</taxon>
    </lineage>
</organism>
<protein>
    <recommendedName>
        <fullName>Golgin subfamily A member 1</fullName>
    </recommendedName>
    <alternativeName>
        <fullName>Golgin-97</fullName>
    </alternativeName>
</protein>
<proteinExistence type="evidence at protein level"/>